<organism>
    <name type="scientific">Novosphingobium aromaticivorans (strain ATCC 700278 / DSM 12444 / CCUG 56034 / CIP 105152 / NBRC 16084 / F199)</name>
    <dbReference type="NCBI Taxonomy" id="279238"/>
    <lineage>
        <taxon>Bacteria</taxon>
        <taxon>Pseudomonadati</taxon>
        <taxon>Pseudomonadota</taxon>
        <taxon>Alphaproteobacteria</taxon>
        <taxon>Sphingomonadales</taxon>
        <taxon>Sphingomonadaceae</taxon>
        <taxon>Novosphingobium</taxon>
    </lineage>
</organism>
<sequence length="246" mass="26704">MTFAATVLTLYPEMFPGPLGVSLAGRALREGAWAMDAVQIRDFAIDKHKTVDDTPAGGGAGMVLRVDVLAKAIDHAREAHPGCPVIAMTPRGKPLTQERVRQLADGPGVIVLCGRFEGFDERIFAGREVEEVSVGDIVLSGGECAALMLLDACIRLLPGVMGAASSGHEESFENGLLEYPHYTRPAEWEGRTIPEVLRSGDHAKIAAWRKSQSEIDTRLRRPDLWERHIGARVQSASGAQREVQDD</sequence>
<gene>
    <name evidence="1" type="primary">trmD</name>
    <name type="ordered locus">Saro_1407</name>
</gene>
<keyword id="KW-0963">Cytoplasm</keyword>
<keyword id="KW-0489">Methyltransferase</keyword>
<keyword id="KW-1185">Reference proteome</keyword>
<keyword id="KW-0949">S-adenosyl-L-methionine</keyword>
<keyword id="KW-0808">Transferase</keyword>
<keyword id="KW-0819">tRNA processing</keyword>
<feature type="chain" id="PRO_0000257443" description="tRNA (guanine-N(1)-)-methyltransferase">
    <location>
        <begin position="1"/>
        <end position="246"/>
    </location>
</feature>
<feature type="binding site" evidence="1">
    <location>
        <position position="114"/>
    </location>
    <ligand>
        <name>S-adenosyl-L-methionine</name>
        <dbReference type="ChEBI" id="CHEBI:59789"/>
    </ligand>
</feature>
<dbReference type="EC" id="2.1.1.228" evidence="1"/>
<dbReference type="EMBL" id="CP000248">
    <property type="protein sequence ID" value="ABD25851.1"/>
    <property type="molecule type" value="Genomic_DNA"/>
</dbReference>
<dbReference type="RefSeq" id="WP_011445065.1">
    <property type="nucleotide sequence ID" value="NC_007794.1"/>
</dbReference>
<dbReference type="SMR" id="Q2G8H2"/>
<dbReference type="STRING" id="279238.Saro_1407"/>
<dbReference type="KEGG" id="nar:Saro_1407"/>
<dbReference type="eggNOG" id="COG0336">
    <property type="taxonomic scope" value="Bacteria"/>
</dbReference>
<dbReference type="HOGENOM" id="CLU_047363_0_1_5"/>
<dbReference type="Proteomes" id="UP000009134">
    <property type="component" value="Chromosome"/>
</dbReference>
<dbReference type="GO" id="GO:0005829">
    <property type="term" value="C:cytosol"/>
    <property type="evidence" value="ECO:0007669"/>
    <property type="project" value="TreeGrafter"/>
</dbReference>
<dbReference type="GO" id="GO:0052906">
    <property type="term" value="F:tRNA (guanine(37)-N1)-methyltransferase activity"/>
    <property type="evidence" value="ECO:0007669"/>
    <property type="project" value="UniProtKB-UniRule"/>
</dbReference>
<dbReference type="GO" id="GO:0002939">
    <property type="term" value="P:tRNA N1-guanine methylation"/>
    <property type="evidence" value="ECO:0007669"/>
    <property type="project" value="TreeGrafter"/>
</dbReference>
<dbReference type="CDD" id="cd18080">
    <property type="entry name" value="TrmD-like"/>
    <property type="match status" value="1"/>
</dbReference>
<dbReference type="Gene3D" id="3.40.1280.10">
    <property type="match status" value="1"/>
</dbReference>
<dbReference type="Gene3D" id="1.10.1270.20">
    <property type="entry name" value="tRNA(m1g37)methyltransferase, domain 2"/>
    <property type="match status" value="1"/>
</dbReference>
<dbReference type="HAMAP" id="MF_00605">
    <property type="entry name" value="TrmD"/>
    <property type="match status" value="1"/>
</dbReference>
<dbReference type="InterPro" id="IPR029028">
    <property type="entry name" value="Alpha/beta_knot_MTases"/>
</dbReference>
<dbReference type="InterPro" id="IPR023148">
    <property type="entry name" value="tRNA_m1G_MeTrfase_C_sf"/>
</dbReference>
<dbReference type="InterPro" id="IPR002649">
    <property type="entry name" value="tRNA_m1G_MeTrfase_TrmD"/>
</dbReference>
<dbReference type="InterPro" id="IPR029026">
    <property type="entry name" value="tRNA_m1G_MTases_N"/>
</dbReference>
<dbReference type="InterPro" id="IPR016009">
    <property type="entry name" value="tRNA_MeTrfase_TRMD/TRM10"/>
</dbReference>
<dbReference type="NCBIfam" id="NF000648">
    <property type="entry name" value="PRK00026.1"/>
    <property type="match status" value="1"/>
</dbReference>
<dbReference type="NCBIfam" id="TIGR00088">
    <property type="entry name" value="trmD"/>
    <property type="match status" value="1"/>
</dbReference>
<dbReference type="PANTHER" id="PTHR46417">
    <property type="entry name" value="TRNA (GUANINE-N(1)-)-METHYLTRANSFERASE"/>
    <property type="match status" value="1"/>
</dbReference>
<dbReference type="PANTHER" id="PTHR46417:SF1">
    <property type="entry name" value="TRNA (GUANINE-N(1)-)-METHYLTRANSFERASE"/>
    <property type="match status" value="1"/>
</dbReference>
<dbReference type="Pfam" id="PF01746">
    <property type="entry name" value="tRNA_m1G_MT"/>
    <property type="match status" value="1"/>
</dbReference>
<dbReference type="PIRSF" id="PIRSF000386">
    <property type="entry name" value="tRNA_mtase"/>
    <property type="match status" value="1"/>
</dbReference>
<dbReference type="SUPFAM" id="SSF75217">
    <property type="entry name" value="alpha/beta knot"/>
    <property type="match status" value="1"/>
</dbReference>
<protein>
    <recommendedName>
        <fullName evidence="1">tRNA (guanine-N(1)-)-methyltransferase</fullName>
        <ecNumber evidence="1">2.1.1.228</ecNumber>
    </recommendedName>
    <alternativeName>
        <fullName evidence="1">M1G-methyltransferase</fullName>
    </alternativeName>
    <alternativeName>
        <fullName evidence="1">tRNA [GM37] methyltransferase</fullName>
    </alternativeName>
</protein>
<name>TRMD_NOVAD</name>
<accession>Q2G8H2</accession>
<reference key="1">
    <citation type="submission" date="2006-01" db="EMBL/GenBank/DDBJ databases">
        <title>Complete sequence of Novosphingobium aromaticivorans DSM 12444.</title>
        <authorList>
            <consortium name="US DOE Joint Genome Institute"/>
            <person name="Copeland A."/>
            <person name="Lucas S."/>
            <person name="Lapidus A."/>
            <person name="Barry K."/>
            <person name="Detter J.C."/>
            <person name="Glavina T."/>
            <person name="Hammon N."/>
            <person name="Israni S."/>
            <person name="Pitluck S."/>
            <person name="Chain P."/>
            <person name="Malfatti S."/>
            <person name="Shin M."/>
            <person name="Vergez L."/>
            <person name="Schmutz J."/>
            <person name="Larimer F."/>
            <person name="Land M."/>
            <person name="Kyrpides N."/>
            <person name="Ivanova N."/>
            <person name="Fredrickson J."/>
            <person name="Balkwill D."/>
            <person name="Romine M.F."/>
            <person name="Richardson P."/>
        </authorList>
    </citation>
    <scope>NUCLEOTIDE SEQUENCE [LARGE SCALE GENOMIC DNA]</scope>
    <source>
        <strain>ATCC 700278 / DSM 12444 / CCUG 56034 / CIP 105152 / NBRC 16084 / F199</strain>
    </source>
</reference>
<comment type="function">
    <text evidence="1">Specifically methylates guanosine-37 in various tRNAs.</text>
</comment>
<comment type="catalytic activity">
    <reaction evidence="1">
        <text>guanosine(37) in tRNA + S-adenosyl-L-methionine = N(1)-methylguanosine(37) in tRNA + S-adenosyl-L-homocysteine + H(+)</text>
        <dbReference type="Rhea" id="RHEA:36899"/>
        <dbReference type="Rhea" id="RHEA-COMP:10145"/>
        <dbReference type="Rhea" id="RHEA-COMP:10147"/>
        <dbReference type="ChEBI" id="CHEBI:15378"/>
        <dbReference type="ChEBI" id="CHEBI:57856"/>
        <dbReference type="ChEBI" id="CHEBI:59789"/>
        <dbReference type="ChEBI" id="CHEBI:73542"/>
        <dbReference type="ChEBI" id="CHEBI:74269"/>
        <dbReference type="EC" id="2.1.1.228"/>
    </reaction>
</comment>
<comment type="subunit">
    <text evidence="1">Homodimer.</text>
</comment>
<comment type="subcellular location">
    <subcellularLocation>
        <location evidence="1">Cytoplasm</location>
    </subcellularLocation>
</comment>
<comment type="similarity">
    <text evidence="1">Belongs to the RNA methyltransferase TrmD family.</text>
</comment>
<evidence type="ECO:0000255" key="1">
    <source>
        <dbReference type="HAMAP-Rule" id="MF_00605"/>
    </source>
</evidence>
<proteinExistence type="inferred from homology"/>